<reference key="1">
    <citation type="journal article" date="1995" name="Nucleic Acids Res.">
        <title>Analysis of the Escherichia coli genome VI: DNA sequence of the region from 92.8 through 100 minutes.</title>
        <authorList>
            <person name="Burland V.D."/>
            <person name="Plunkett G. III"/>
            <person name="Sofia H.J."/>
            <person name="Daniels D.L."/>
            <person name="Blattner F.R."/>
        </authorList>
    </citation>
    <scope>NUCLEOTIDE SEQUENCE [LARGE SCALE GENOMIC DNA]</scope>
    <source>
        <strain>K12 / MG1655 / ATCC 47076</strain>
    </source>
</reference>
<reference key="2">
    <citation type="journal article" date="1997" name="Science">
        <title>The complete genome sequence of Escherichia coli K-12.</title>
        <authorList>
            <person name="Blattner F.R."/>
            <person name="Plunkett G. III"/>
            <person name="Bloch C.A."/>
            <person name="Perna N.T."/>
            <person name="Burland V."/>
            <person name="Riley M."/>
            <person name="Collado-Vides J."/>
            <person name="Glasner J.D."/>
            <person name="Rode C.K."/>
            <person name="Mayhew G.F."/>
            <person name="Gregor J."/>
            <person name="Davis N.W."/>
            <person name="Kirkpatrick H.A."/>
            <person name="Goeden M.A."/>
            <person name="Rose D.J."/>
            <person name="Mau B."/>
            <person name="Shao Y."/>
        </authorList>
    </citation>
    <scope>NUCLEOTIDE SEQUENCE [LARGE SCALE GENOMIC DNA]</scope>
    <source>
        <strain>K12 / MG1655 / ATCC 47076</strain>
    </source>
</reference>
<reference key="3">
    <citation type="journal article" date="2006" name="Mol. Syst. Biol.">
        <title>Highly accurate genome sequences of Escherichia coli K-12 strains MG1655 and W3110.</title>
        <authorList>
            <person name="Hayashi K."/>
            <person name="Morooka N."/>
            <person name="Yamamoto Y."/>
            <person name="Fujita K."/>
            <person name="Isono K."/>
            <person name="Choi S."/>
            <person name="Ohtsubo E."/>
            <person name="Baba T."/>
            <person name="Wanner B.L."/>
            <person name="Mori H."/>
            <person name="Horiuchi T."/>
        </authorList>
    </citation>
    <scope>NUCLEOTIDE SEQUENCE [LARGE SCALE GENOMIC DNA]</scope>
    <source>
        <strain>K12 / W3110 / ATCC 27325 / DSM 5911</strain>
    </source>
</reference>
<reference key="4">
    <citation type="journal article" date="1991" name="J. Bacteriol.">
        <title>Characterization and expression of the Escherichia coli Mrr restriction system.</title>
        <authorList>
            <person name="Waite-Rees P.A."/>
            <person name="Keating C.J."/>
            <person name="Moran L.S."/>
            <person name="Slatko B.E."/>
            <person name="Hornstra L.J."/>
            <person name="Benner J.S."/>
        </authorList>
    </citation>
    <scope>NUCLEOTIDE SEQUENCE [GENOMIC DNA] OF 39-318</scope>
    <source>
        <strain>K12</strain>
    </source>
</reference>
<reference key="5">
    <citation type="journal article" date="2004" name="Proteins">
        <title>Crystal structure of the Escherichia coli YjiA protein suggests a GTP-dependent regulatory function.</title>
        <authorList>
            <person name="Khil P.P."/>
            <person name="Obmolova G."/>
            <person name="Teplyakov A."/>
            <person name="Howard A.J."/>
            <person name="Gilliland G.L."/>
            <person name="Camerini-Otero R.D."/>
        </authorList>
    </citation>
    <scope>X-RAY CRYSTALLOGRAPHY (2.0 ANGSTROMS)</scope>
    <scope>CATALYTIC ACTIVITY</scope>
    <scope>GTP-BINDING</scope>
</reference>
<reference evidence="8 9" key="6">
    <citation type="journal article" date="2013" name="Biochemistry">
        <title>Metal binding properties of Escherichia coli YjiA, a member of the metal homeostasis-associated COG0523 family of GTPases.</title>
        <authorList>
            <person name="Sydor A.M."/>
            <person name="Jost M."/>
            <person name="Ryan K.S."/>
            <person name="Turo K.E."/>
            <person name="Douglas C.D."/>
            <person name="Drennan C.L."/>
            <person name="Zamble D.B."/>
        </authorList>
    </citation>
    <scope>X-RAY CRYSTALLOGRAPHY (2.05 ANGSTROMS) IN COMPLEX WITH ZINC</scope>
    <scope>ACTIVITY REGULATION</scope>
    <scope>CATALYTIC ACTIVITY</scope>
    <scope>BIOPHYSICOCHEMICAL PROPERTIES</scope>
    <scope>SUBUNIT</scope>
</reference>
<gene>
    <name type="primary">yjiA</name>
    <name type="ordered locus">b4352</name>
    <name type="ordered locus">JW5790</name>
</gene>
<feature type="chain" id="PRO_0000169785" description="Zinc chaperone YjiA" evidence="3">
    <location>
        <begin position="1"/>
        <end position="318"/>
    </location>
</feature>
<feature type="domain" description="CobW C-terminal" evidence="3">
    <location>
        <begin position="224"/>
        <end position="315"/>
    </location>
</feature>
<feature type="short sequence motif" description="CXCC motif" evidence="3">
    <location>
        <begin position="64"/>
        <end position="67"/>
    </location>
</feature>
<feature type="binding site" evidence="1">
    <location>
        <begin position="11"/>
        <end position="19"/>
    </location>
    <ligand>
        <name>GTP</name>
        <dbReference type="ChEBI" id="CHEBI:37565"/>
    </ligand>
</feature>
<feature type="binding site" evidence="5">
    <location>
        <position position="37"/>
    </location>
    <ligand>
        <name>Zn(2+)</name>
        <dbReference type="ChEBI" id="CHEBI:29105"/>
        <label>1</label>
    </ligand>
</feature>
<feature type="binding site" evidence="5">
    <location>
        <position position="42"/>
    </location>
    <ligand>
        <name>Zn(2+)</name>
        <dbReference type="ChEBI" id="CHEBI:29105"/>
        <label>1</label>
    </ligand>
</feature>
<feature type="binding site" evidence="5">
    <location>
        <position position="66"/>
    </location>
    <ligand>
        <name>Zn(2+)</name>
        <dbReference type="ChEBI" id="CHEBI:29105"/>
        <label>1</label>
    </ligand>
</feature>
<feature type="binding site" evidence="5">
    <location>
        <position position="74"/>
    </location>
    <ligand>
        <name>Zn(2+)</name>
        <dbReference type="ChEBI" id="CHEBI:29105"/>
        <label>2</label>
        <note>ligand shared between dimeric partners</note>
    </ligand>
</feature>
<feature type="binding site" evidence="5">
    <location>
        <position position="114"/>
    </location>
    <ligand>
        <name>Zn(2+)</name>
        <dbReference type="ChEBI" id="CHEBI:29105"/>
        <label>2</label>
        <note>ligand shared between dimeric partners</note>
    </ligand>
</feature>
<feature type="binding site" evidence="1">
    <location>
        <position position="161"/>
    </location>
    <ligand>
        <name>GTP</name>
        <dbReference type="ChEBI" id="CHEBI:37565"/>
    </ligand>
</feature>
<feature type="binding site" description="in other chain" evidence="5">
    <location>
        <position position="167"/>
    </location>
    <ligand>
        <name>Zn(2+)</name>
        <dbReference type="ChEBI" id="CHEBI:29105"/>
        <label>3</label>
        <note>ligand shared between dimeric partners</note>
    </ligand>
</feature>
<feature type="binding site" evidence="5">
    <location>
        <position position="167"/>
    </location>
    <ligand>
        <name>Zn(2+)</name>
        <dbReference type="ChEBI" id="CHEBI:29105"/>
        <label>4</label>
        <note>ligand shared between dimeric partners</note>
    </ligand>
</feature>
<feature type="binding site" description="in other chain" evidence="5">
    <location>
        <position position="170"/>
    </location>
    <ligand>
        <name>Zn(2+)</name>
        <dbReference type="ChEBI" id="CHEBI:29105"/>
        <label>3</label>
        <note>ligand shared between dimeric partners</note>
    </ligand>
</feature>
<feature type="binding site" evidence="5">
    <location>
        <position position="170"/>
    </location>
    <ligand>
        <name>Zn(2+)</name>
        <dbReference type="ChEBI" id="CHEBI:29105"/>
        <label>4</label>
        <note>ligand shared between dimeric partners</note>
    </ligand>
</feature>
<feature type="binding site" evidence="5">
    <location>
        <position position="187"/>
    </location>
    <ligand>
        <name>Zn(2+)</name>
        <dbReference type="ChEBI" id="CHEBI:29105"/>
        <label>3</label>
        <note>ligand shared between dimeric partners</note>
    </ligand>
</feature>
<feature type="binding site" description="in other chain" evidence="5">
    <location>
        <position position="187"/>
    </location>
    <ligand>
        <name>Zn(2+)</name>
        <dbReference type="ChEBI" id="CHEBI:29105"/>
        <label>4</label>
        <note>ligand shared between dimeric partners</note>
    </ligand>
</feature>
<feature type="strand" evidence="10">
    <location>
        <begin position="4"/>
        <end position="16"/>
    </location>
</feature>
<feature type="helix" evidence="10">
    <location>
        <begin position="18"/>
        <end position="26"/>
    </location>
</feature>
<feature type="strand" evidence="10">
    <location>
        <begin position="33"/>
        <end position="36"/>
    </location>
</feature>
<feature type="strand" evidence="10">
    <location>
        <begin position="45"/>
        <end position="50"/>
    </location>
</feature>
<feature type="strand" evidence="10">
    <location>
        <begin position="56"/>
        <end position="60"/>
    </location>
</feature>
<feature type="strand" evidence="10">
    <location>
        <begin position="65"/>
        <end position="67"/>
    </location>
</feature>
<feature type="helix" evidence="10">
    <location>
        <begin position="73"/>
        <end position="85"/>
    </location>
</feature>
<feature type="strand" evidence="10">
    <location>
        <begin position="92"/>
        <end position="99"/>
    </location>
</feature>
<feature type="helix" evidence="10">
    <location>
        <begin position="104"/>
        <end position="113"/>
    </location>
</feature>
<feature type="helix" evidence="10">
    <location>
        <begin position="115"/>
        <end position="120"/>
    </location>
</feature>
<feature type="strand" evidence="10">
    <location>
        <begin position="121"/>
        <end position="131"/>
    </location>
</feature>
<feature type="turn" evidence="10">
    <location>
        <begin position="132"/>
        <end position="134"/>
    </location>
</feature>
<feature type="helix" evidence="10">
    <location>
        <begin position="135"/>
        <end position="141"/>
    </location>
</feature>
<feature type="helix" evidence="10">
    <location>
        <begin position="143"/>
        <end position="150"/>
    </location>
</feature>
<feature type="strand" evidence="10">
    <location>
        <begin position="153"/>
        <end position="158"/>
    </location>
</feature>
<feature type="turn" evidence="10">
    <location>
        <begin position="160"/>
        <end position="162"/>
    </location>
</feature>
<feature type="helix" evidence="10">
    <location>
        <begin position="167"/>
        <end position="176"/>
    </location>
</feature>
<feature type="strand" evidence="10">
    <location>
        <begin position="178"/>
        <end position="180"/>
    </location>
</feature>
<feature type="strand" evidence="10">
    <location>
        <begin position="182"/>
        <end position="184"/>
    </location>
</feature>
<feature type="strand" evidence="11">
    <location>
        <begin position="187"/>
        <end position="189"/>
    </location>
</feature>
<feature type="helix" evidence="10">
    <location>
        <begin position="192"/>
        <end position="195"/>
    </location>
</feature>
<feature type="helix" evidence="10">
    <location>
        <begin position="218"/>
        <end position="221"/>
    </location>
</feature>
<feature type="strand" evidence="10">
    <location>
        <begin position="223"/>
        <end position="233"/>
    </location>
</feature>
<feature type="helix" evidence="10">
    <location>
        <begin position="237"/>
        <end position="250"/>
    </location>
</feature>
<feature type="turn" evidence="10">
    <location>
        <begin position="251"/>
        <end position="254"/>
    </location>
</feature>
<feature type="strand" evidence="10">
    <location>
        <begin position="255"/>
        <end position="262"/>
    </location>
</feature>
<feature type="strand" evidence="10">
    <location>
        <begin position="268"/>
        <end position="276"/>
    </location>
</feature>
<feature type="strand" evidence="10">
    <location>
        <begin position="279"/>
        <end position="287"/>
    </location>
</feature>
<feature type="strand" evidence="10">
    <location>
        <begin position="295"/>
        <end position="303"/>
    </location>
</feature>
<feature type="helix" evidence="10">
    <location>
        <begin position="306"/>
        <end position="314"/>
    </location>
</feature>
<evidence type="ECO:0000250" key="1">
    <source>
        <dbReference type="UniProtKB" id="P9WPZ1"/>
    </source>
</evidence>
<evidence type="ECO:0000250" key="2">
    <source>
        <dbReference type="UniProtKB" id="Q8VEH6"/>
    </source>
</evidence>
<evidence type="ECO:0000255" key="3"/>
<evidence type="ECO:0000269" key="4">
    <source>
    </source>
</evidence>
<evidence type="ECO:0000269" key="5">
    <source>
    </source>
</evidence>
<evidence type="ECO:0000303" key="6">
    <source>
    </source>
</evidence>
<evidence type="ECO:0000305" key="7"/>
<evidence type="ECO:0007744" key="8">
    <source>
        <dbReference type="PDB" id="4IXM"/>
    </source>
</evidence>
<evidence type="ECO:0007744" key="9">
    <source>
        <dbReference type="PDB" id="4IXN"/>
    </source>
</evidence>
<evidence type="ECO:0007829" key="10">
    <source>
        <dbReference type="PDB" id="1NIJ"/>
    </source>
</evidence>
<evidence type="ECO:0007829" key="11">
    <source>
        <dbReference type="PDB" id="4IXM"/>
    </source>
</evidence>
<sequence length="318" mass="35660">MNPIAVTLLTGFLGAGKTTLLRHILNEQHGYKIAVIENEFGEVSVDDQLIGDRATQIKTLTNGCICCSRSNELEDALLDLLDNLDKGNIQFDRLVIECTGMADPGPIIQTFFSHEVLCQRYLLDGVIALVDAVHADEQMNQFTIAQSQVGYADRILLTKTDVAGEAEKLHERLARINARAPVYTVTHGDIDLGLLFNTNGFMLEENVVSTKPRFHFIADKQNDISSIVVELDYPVDISEVSRVMENLLLESADKLLRYKGMLWIDGEPNRLLFQGVQRLYSADWDRPWGDEKPHSTMVFIGIQLPEEEIRAAFAGLRK</sequence>
<proteinExistence type="evidence at protein level"/>
<keyword id="KW-0002">3D-structure</keyword>
<keyword id="KW-0143">Chaperone</keyword>
<keyword id="KW-0342">GTP-binding</keyword>
<keyword id="KW-0378">Hydrolase</keyword>
<keyword id="KW-0479">Metal-binding</keyword>
<keyword id="KW-0547">Nucleotide-binding</keyword>
<keyword id="KW-1185">Reference proteome</keyword>
<keyword id="KW-0862">Zinc</keyword>
<accession>P24203</accession>
<accession>Q2M5W4</accession>
<comment type="function">
    <text evidence="2">Zinc chaperone that directly transfers zinc cofactor to target proteins, thereby activating them (By similarity). Zinc is transferred from the CXCC motif in the GTPase domain to the zinc binding site in target proteins in a process requiring GTP hydrolysis (By similarity).</text>
</comment>
<comment type="catalytic activity">
    <reaction evidence="4 5">
        <text>GTP + H2O = GDP + phosphate + H(+)</text>
        <dbReference type="Rhea" id="RHEA:19669"/>
        <dbReference type="ChEBI" id="CHEBI:15377"/>
        <dbReference type="ChEBI" id="CHEBI:15378"/>
        <dbReference type="ChEBI" id="CHEBI:37565"/>
        <dbReference type="ChEBI" id="CHEBI:43474"/>
        <dbReference type="ChEBI" id="CHEBI:58189"/>
    </reaction>
    <physiologicalReaction direction="left-to-right" evidence="4 5">
        <dbReference type="Rhea" id="RHEA:19670"/>
    </physiologicalReaction>
</comment>
<comment type="activity regulation">
    <text evidence="5">GTPase activity is inhibited by metal binding. Activity is decreased in the presence of Co(II) or Ni(II), and is completely inhibited in the presence of Zn(II).</text>
</comment>
<comment type="biophysicochemical properties">
    <kinetics>
        <text evidence="5">kcat is 0.006 sec(-1) for GTP hydrolysis in the absence of metal. kcat is 0.0005 sec(-1) for GTP hydrolysis in the presence of Co(II).</text>
    </kinetics>
</comment>
<comment type="subunit">
    <text evidence="5">Monomer in the apo form (PubMed:24449932). Metal binding induces oligomerization. Forms homodimers and higher oligomers (PubMed:24449932).</text>
</comment>
<comment type="similarity">
    <text evidence="7">Belongs to the SIMIBI class G3E GTPase family. ZNG1 subfamily.</text>
</comment>
<comment type="sequence caution" evidence="7">
    <conflict type="frameshift">
        <sequence resource="EMBL-CDS" id="AAA97249"/>
    </conflict>
</comment>
<organism>
    <name type="scientific">Escherichia coli (strain K12)</name>
    <dbReference type="NCBI Taxonomy" id="83333"/>
    <lineage>
        <taxon>Bacteria</taxon>
        <taxon>Pseudomonadati</taxon>
        <taxon>Pseudomonadota</taxon>
        <taxon>Gammaproteobacteria</taxon>
        <taxon>Enterobacterales</taxon>
        <taxon>Enterobacteriaceae</taxon>
        <taxon>Escherichia</taxon>
    </lineage>
</organism>
<dbReference type="EC" id="3.6.5.-" evidence="4 5"/>
<dbReference type="EMBL" id="U14003">
    <property type="protein sequence ID" value="AAA97249.1"/>
    <property type="status" value="ALT_FRAME"/>
    <property type="molecule type" value="Genomic_DNA"/>
</dbReference>
<dbReference type="EMBL" id="U00096">
    <property type="protein sequence ID" value="AAC77308.2"/>
    <property type="molecule type" value="Genomic_DNA"/>
</dbReference>
<dbReference type="EMBL" id="AP009048">
    <property type="protein sequence ID" value="BAE78342.1"/>
    <property type="molecule type" value="Genomic_DNA"/>
</dbReference>
<dbReference type="EMBL" id="X54198">
    <property type="protein sequence ID" value="CAA38118.1"/>
    <property type="molecule type" value="Genomic_DNA"/>
</dbReference>
<dbReference type="PIR" id="S56578">
    <property type="entry name" value="S56578"/>
</dbReference>
<dbReference type="RefSeq" id="NP_418772.4">
    <property type="nucleotide sequence ID" value="NC_000913.3"/>
</dbReference>
<dbReference type="RefSeq" id="WP_001312515.1">
    <property type="nucleotide sequence ID" value="NZ_LN832404.1"/>
</dbReference>
<dbReference type="PDB" id="1NIJ">
    <property type="method" value="X-ray"/>
    <property type="resolution" value="2.00 A"/>
    <property type="chains" value="A=1-318"/>
</dbReference>
<dbReference type="PDB" id="4IXM">
    <property type="method" value="X-ray"/>
    <property type="resolution" value="2.57 A"/>
    <property type="chains" value="A/B=1-318"/>
</dbReference>
<dbReference type="PDB" id="4IXN">
    <property type="method" value="X-ray"/>
    <property type="resolution" value="2.05 A"/>
    <property type="chains" value="A/B=1-318"/>
</dbReference>
<dbReference type="PDBsum" id="1NIJ"/>
<dbReference type="PDBsum" id="4IXM"/>
<dbReference type="PDBsum" id="4IXN"/>
<dbReference type="SMR" id="P24203"/>
<dbReference type="BioGRID" id="4262771">
    <property type="interactions" value="41"/>
</dbReference>
<dbReference type="BioGRID" id="853160">
    <property type="interactions" value="1"/>
</dbReference>
<dbReference type="DIP" id="DIP-12630N"/>
<dbReference type="FunCoup" id="P24203">
    <property type="interactions" value="606"/>
</dbReference>
<dbReference type="IntAct" id="P24203">
    <property type="interactions" value="2"/>
</dbReference>
<dbReference type="STRING" id="511145.b4352"/>
<dbReference type="jPOST" id="P24203"/>
<dbReference type="PaxDb" id="511145-b4352"/>
<dbReference type="EnsemblBacteria" id="AAC77308">
    <property type="protein sequence ID" value="AAC77308"/>
    <property type="gene ID" value="b4352"/>
</dbReference>
<dbReference type="GeneID" id="948882"/>
<dbReference type="KEGG" id="ecj:JW5790"/>
<dbReference type="KEGG" id="eco:b4352"/>
<dbReference type="KEGG" id="ecoc:C3026_23510"/>
<dbReference type="PATRIC" id="fig|1411691.4.peg.2334"/>
<dbReference type="EchoBASE" id="EB0020"/>
<dbReference type="eggNOG" id="COG0523">
    <property type="taxonomic scope" value="Bacteria"/>
</dbReference>
<dbReference type="HOGENOM" id="CLU_017452_0_2_6"/>
<dbReference type="InParanoid" id="P24203"/>
<dbReference type="OMA" id="HSQGFET"/>
<dbReference type="OrthoDB" id="9808822at2"/>
<dbReference type="PhylomeDB" id="P24203"/>
<dbReference type="BioCyc" id="EcoCyc:EG10021-MONOMER"/>
<dbReference type="BioCyc" id="MetaCyc:EG10021-MONOMER"/>
<dbReference type="EvolutionaryTrace" id="P24203"/>
<dbReference type="PRO" id="PR:P24203"/>
<dbReference type="Proteomes" id="UP000000625">
    <property type="component" value="Chromosome"/>
</dbReference>
<dbReference type="GO" id="GO:0005737">
    <property type="term" value="C:cytoplasm"/>
    <property type="evidence" value="ECO:0000318"/>
    <property type="project" value="GO_Central"/>
</dbReference>
<dbReference type="GO" id="GO:0005829">
    <property type="term" value="C:cytosol"/>
    <property type="evidence" value="ECO:0000314"/>
    <property type="project" value="EcoCyc"/>
</dbReference>
<dbReference type="GO" id="GO:0005525">
    <property type="term" value="F:GTP binding"/>
    <property type="evidence" value="ECO:0007669"/>
    <property type="project" value="UniProtKB-KW"/>
</dbReference>
<dbReference type="GO" id="GO:0003924">
    <property type="term" value="F:GTPase activity"/>
    <property type="evidence" value="ECO:0000314"/>
    <property type="project" value="EcoCyc"/>
</dbReference>
<dbReference type="GO" id="GO:0042802">
    <property type="term" value="F:identical protein binding"/>
    <property type="evidence" value="ECO:0000314"/>
    <property type="project" value="EcoCyc"/>
</dbReference>
<dbReference type="GO" id="GO:0046914">
    <property type="term" value="F:transition metal ion binding"/>
    <property type="evidence" value="ECO:0000314"/>
    <property type="project" value="EcoCyc"/>
</dbReference>
<dbReference type="GO" id="GO:0006974">
    <property type="term" value="P:DNA damage response"/>
    <property type="evidence" value="ECO:0000270"/>
    <property type="project" value="EcoliWiki"/>
</dbReference>
<dbReference type="CDD" id="cd03112">
    <property type="entry name" value="CobW-like"/>
    <property type="match status" value="1"/>
</dbReference>
<dbReference type="FunFam" id="3.30.1220.10:FF:000001">
    <property type="entry name" value="GTP-binding protein YjiA"/>
    <property type="match status" value="1"/>
</dbReference>
<dbReference type="FunFam" id="3.40.50.300:FF:000778">
    <property type="entry name" value="GTP-binding protein YjiA"/>
    <property type="match status" value="1"/>
</dbReference>
<dbReference type="Gene3D" id="3.30.1220.10">
    <property type="entry name" value="CobW-like, C-terminal domain"/>
    <property type="match status" value="1"/>
</dbReference>
<dbReference type="Gene3D" id="3.40.50.300">
    <property type="entry name" value="P-loop containing nucleotide triphosphate hydrolases"/>
    <property type="match status" value="1"/>
</dbReference>
<dbReference type="InterPro" id="IPR036627">
    <property type="entry name" value="CobW-likC_sf"/>
</dbReference>
<dbReference type="InterPro" id="IPR011629">
    <property type="entry name" value="CobW-like_C"/>
</dbReference>
<dbReference type="InterPro" id="IPR003495">
    <property type="entry name" value="CobW/HypB/UreG_nucleotide-bd"/>
</dbReference>
<dbReference type="InterPro" id="IPR027417">
    <property type="entry name" value="P-loop_NTPase"/>
</dbReference>
<dbReference type="InterPro" id="IPR051316">
    <property type="entry name" value="Zinc-reg_GTPase_activator"/>
</dbReference>
<dbReference type="NCBIfam" id="NF008578">
    <property type="entry name" value="PRK11537.1"/>
    <property type="match status" value="1"/>
</dbReference>
<dbReference type="PANTHER" id="PTHR13748:SF62">
    <property type="entry name" value="COBW DOMAIN-CONTAINING PROTEIN"/>
    <property type="match status" value="1"/>
</dbReference>
<dbReference type="PANTHER" id="PTHR13748">
    <property type="entry name" value="COBW-RELATED"/>
    <property type="match status" value="1"/>
</dbReference>
<dbReference type="Pfam" id="PF02492">
    <property type="entry name" value="cobW"/>
    <property type="match status" value="1"/>
</dbReference>
<dbReference type="Pfam" id="PF07683">
    <property type="entry name" value="CobW_C"/>
    <property type="match status" value="1"/>
</dbReference>
<dbReference type="SMART" id="SM00833">
    <property type="entry name" value="CobW_C"/>
    <property type="match status" value="1"/>
</dbReference>
<dbReference type="SUPFAM" id="SSF90002">
    <property type="entry name" value="Hypothetical protein YjiA, C-terminal domain"/>
    <property type="match status" value="1"/>
</dbReference>
<dbReference type="SUPFAM" id="SSF52540">
    <property type="entry name" value="P-loop containing nucleoside triphosphate hydrolases"/>
    <property type="match status" value="1"/>
</dbReference>
<protein>
    <recommendedName>
        <fullName evidence="6">Zinc chaperone YjiA</fullName>
        <ecNumber evidence="4 5">3.6.5.-</ecNumber>
    </recommendedName>
    <alternativeName>
        <fullName evidence="7">GTP-binding protein YjiA</fullName>
    </alternativeName>
</protein>
<name>YJIA_ECOLI</name>